<evidence type="ECO:0000305" key="1"/>
<name>PPR66_ARATH</name>
<proteinExistence type="evidence at transcript level"/>
<accession>Q9C6R9</accession>
<feature type="chain" id="PRO_0000342807" description="Pentatricopeptide repeat-containing protein At1g31790">
    <location>
        <begin position="1"/>
        <end position="409"/>
    </location>
</feature>
<feature type="repeat" description="PPR 1">
    <location>
        <begin position="87"/>
        <end position="121"/>
    </location>
</feature>
<feature type="repeat" description="PPR 2">
    <location>
        <begin position="122"/>
        <end position="152"/>
    </location>
</feature>
<feature type="repeat" description="PPR 3">
    <location>
        <begin position="153"/>
        <end position="187"/>
    </location>
</feature>
<feature type="repeat" description="PPR 4">
    <location>
        <begin position="192"/>
        <end position="226"/>
    </location>
</feature>
<feature type="repeat" description="PPR 5">
    <location>
        <begin position="229"/>
        <end position="259"/>
    </location>
</feature>
<feature type="repeat" description="PPR 6">
    <location>
        <begin position="260"/>
        <end position="294"/>
    </location>
</feature>
<feature type="repeat" description="PPR 7">
    <location>
        <begin position="295"/>
        <end position="330"/>
    </location>
</feature>
<feature type="repeat" description="PPR 8">
    <location>
        <begin position="331"/>
        <end position="361"/>
    </location>
</feature>
<feature type="repeat" description="PPR 9">
    <location>
        <begin position="363"/>
        <end position="397"/>
    </location>
</feature>
<sequence length="409" mass="46254">MKTLELALPPSPPSLVPSFNYNSTARSVGNDVRTNFDVQLFLRKPKHQKSEPVVVIQQPQIQPQNPSSRCSTSDILRLMDSLSLPGNEDIYSCLAKESARENDQRGAHELQVHIMKSSIRPTITFINRLLLMHVSCGRLDITRQMFDRMPHRDFHSWAIVFLGCIEMGDYEDAAFLFVSMLKHSQKGAFKIPSWILGCVLKACAMIRDFELGKQVHALCHKLGFIDEEDSYLSGSLIRFYGEFRCLEDANLVLHQLSNANTVAWAAKVTNDYREGEFQEVIRDFIEMGNHGIKKNVSVFSNVLKACSWVSDGGRSGQQVHANAIKLGFESDCLIRCRLIEMYGKYGKVKDAEKVFKSSKDETSVSCWNAMVASYMQNGIYIEAIKLLYQMKATGIKAHDTLLNEAHLQM</sequence>
<keyword id="KW-1185">Reference proteome</keyword>
<keyword id="KW-0677">Repeat</keyword>
<comment type="similarity">
    <text evidence="1">Belongs to the PPR family. PCMP-A subfamily.</text>
</comment>
<comment type="online information" name="Pentatricopeptide repeat proteins">
    <link uri="https://ppr.plantenergy.uwa.edu.au"/>
</comment>
<dbReference type="EMBL" id="AC079041">
    <property type="protein sequence ID" value="AAG50719.1"/>
    <property type="molecule type" value="Genomic_DNA"/>
</dbReference>
<dbReference type="EMBL" id="CP002684">
    <property type="protein sequence ID" value="AEE31393.1"/>
    <property type="molecule type" value="Genomic_DNA"/>
</dbReference>
<dbReference type="EMBL" id="BT026440">
    <property type="protein sequence ID" value="ABH04547.1"/>
    <property type="molecule type" value="mRNA"/>
</dbReference>
<dbReference type="PIR" id="E86441">
    <property type="entry name" value="E86441"/>
</dbReference>
<dbReference type="RefSeq" id="NP_174459.1">
    <property type="nucleotide sequence ID" value="NM_102913.3"/>
</dbReference>
<dbReference type="SMR" id="Q9C6R9"/>
<dbReference type="FunCoup" id="Q9C6R9">
    <property type="interactions" value="81"/>
</dbReference>
<dbReference type="iPTMnet" id="Q9C6R9"/>
<dbReference type="PaxDb" id="3702-AT1G31790.1"/>
<dbReference type="EnsemblPlants" id="AT1G31790.1">
    <property type="protein sequence ID" value="AT1G31790.1"/>
    <property type="gene ID" value="AT1G31790"/>
</dbReference>
<dbReference type="GeneID" id="840066"/>
<dbReference type="Gramene" id="AT1G31790.1">
    <property type="protein sequence ID" value="AT1G31790.1"/>
    <property type="gene ID" value="AT1G31790"/>
</dbReference>
<dbReference type="KEGG" id="ath:AT1G31790"/>
<dbReference type="Araport" id="AT1G31790"/>
<dbReference type="TAIR" id="AT1G31790"/>
<dbReference type="eggNOG" id="KOG4197">
    <property type="taxonomic scope" value="Eukaryota"/>
</dbReference>
<dbReference type="HOGENOM" id="CLU_002706_0_3_1"/>
<dbReference type="InParanoid" id="Q9C6R9"/>
<dbReference type="OMA" id="ITRQMFD"/>
<dbReference type="PhylomeDB" id="Q9C6R9"/>
<dbReference type="PRO" id="PR:Q9C6R9"/>
<dbReference type="Proteomes" id="UP000006548">
    <property type="component" value="Chromosome 1"/>
</dbReference>
<dbReference type="ExpressionAtlas" id="Q9C6R9">
    <property type="expression patterns" value="baseline and differential"/>
</dbReference>
<dbReference type="GO" id="GO:0003723">
    <property type="term" value="F:RNA binding"/>
    <property type="evidence" value="ECO:0007669"/>
    <property type="project" value="InterPro"/>
</dbReference>
<dbReference type="GO" id="GO:0009451">
    <property type="term" value="P:RNA modification"/>
    <property type="evidence" value="ECO:0007669"/>
    <property type="project" value="InterPro"/>
</dbReference>
<dbReference type="FunFam" id="1.25.40.10:FF:002257">
    <property type="entry name" value="Pentatricopeptide repeat-containing protein At1g31790"/>
    <property type="match status" value="1"/>
</dbReference>
<dbReference type="Gene3D" id="1.25.40.10">
    <property type="entry name" value="Tetratricopeptide repeat domain"/>
    <property type="match status" value="2"/>
</dbReference>
<dbReference type="InterPro" id="IPR002885">
    <property type="entry name" value="Pentatricopeptide_rpt"/>
</dbReference>
<dbReference type="InterPro" id="IPR046960">
    <property type="entry name" value="PPR_At4g14850-like_plant"/>
</dbReference>
<dbReference type="InterPro" id="IPR011990">
    <property type="entry name" value="TPR-like_helical_dom_sf"/>
</dbReference>
<dbReference type="NCBIfam" id="TIGR00756">
    <property type="entry name" value="PPR"/>
    <property type="match status" value="1"/>
</dbReference>
<dbReference type="PANTHER" id="PTHR47926:SF361">
    <property type="entry name" value="PENTACOTRIPEPTIDE-REPEAT REGION OF PRORP DOMAIN-CONTAINING PROTEIN"/>
    <property type="match status" value="1"/>
</dbReference>
<dbReference type="PANTHER" id="PTHR47926">
    <property type="entry name" value="PENTATRICOPEPTIDE REPEAT-CONTAINING PROTEIN"/>
    <property type="match status" value="1"/>
</dbReference>
<dbReference type="Pfam" id="PF01535">
    <property type="entry name" value="PPR"/>
    <property type="match status" value="2"/>
</dbReference>
<dbReference type="PROSITE" id="PS51375">
    <property type="entry name" value="PPR"/>
    <property type="match status" value="7"/>
</dbReference>
<reference key="1">
    <citation type="journal article" date="2000" name="Nature">
        <title>Sequence and analysis of chromosome 1 of the plant Arabidopsis thaliana.</title>
        <authorList>
            <person name="Theologis A."/>
            <person name="Ecker J.R."/>
            <person name="Palm C.J."/>
            <person name="Federspiel N.A."/>
            <person name="Kaul S."/>
            <person name="White O."/>
            <person name="Alonso J."/>
            <person name="Altafi H."/>
            <person name="Araujo R."/>
            <person name="Bowman C.L."/>
            <person name="Brooks S.Y."/>
            <person name="Buehler E."/>
            <person name="Chan A."/>
            <person name="Chao Q."/>
            <person name="Chen H."/>
            <person name="Cheuk R.F."/>
            <person name="Chin C.W."/>
            <person name="Chung M.K."/>
            <person name="Conn L."/>
            <person name="Conway A.B."/>
            <person name="Conway A.R."/>
            <person name="Creasy T.H."/>
            <person name="Dewar K."/>
            <person name="Dunn P."/>
            <person name="Etgu P."/>
            <person name="Feldblyum T.V."/>
            <person name="Feng J.-D."/>
            <person name="Fong B."/>
            <person name="Fujii C.Y."/>
            <person name="Gill J.E."/>
            <person name="Goldsmith A.D."/>
            <person name="Haas B."/>
            <person name="Hansen N.F."/>
            <person name="Hughes B."/>
            <person name="Huizar L."/>
            <person name="Hunter J.L."/>
            <person name="Jenkins J."/>
            <person name="Johnson-Hopson C."/>
            <person name="Khan S."/>
            <person name="Khaykin E."/>
            <person name="Kim C.J."/>
            <person name="Koo H.L."/>
            <person name="Kremenetskaia I."/>
            <person name="Kurtz D.B."/>
            <person name="Kwan A."/>
            <person name="Lam B."/>
            <person name="Langin-Hooper S."/>
            <person name="Lee A."/>
            <person name="Lee J.M."/>
            <person name="Lenz C.A."/>
            <person name="Li J.H."/>
            <person name="Li Y.-P."/>
            <person name="Lin X."/>
            <person name="Liu S.X."/>
            <person name="Liu Z.A."/>
            <person name="Luros J.S."/>
            <person name="Maiti R."/>
            <person name="Marziali A."/>
            <person name="Militscher J."/>
            <person name="Miranda M."/>
            <person name="Nguyen M."/>
            <person name="Nierman W.C."/>
            <person name="Osborne B.I."/>
            <person name="Pai G."/>
            <person name="Peterson J."/>
            <person name="Pham P.K."/>
            <person name="Rizzo M."/>
            <person name="Rooney T."/>
            <person name="Rowley D."/>
            <person name="Sakano H."/>
            <person name="Salzberg S.L."/>
            <person name="Schwartz J.R."/>
            <person name="Shinn P."/>
            <person name="Southwick A.M."/>
            <person name="Sun H."/>
            <person name="Tallon L.J."/>
            <person name="Tambunga G."/>
            <person name="Toriumi M.J."/>
            <person name="Town C.D."/>
            <person name="Utterback T."/>
            <person name="Van Aken S."/>
            <person name="Vaysberg M."/>
            <person name="Vysotskaia V.S."/>
            <person name="Walker M."/>
            <person name="Wu D."/>
            <person name="Yu G."/>
            <person name="Fraser C.M."/>
            <person name="Venter J.C."/>
            <person name="Davis R.W."/>
        </authorList>
    </citation>
    <scope>NUCLEOTIDE SEQUENCE [LARGE SCALE GENOMIC DNA]</scope>
    <source>
        <strain>cv. Columbia</strain>
    </source>
</reference>
<reference key="2">
    <citation type="journal article" date="2017" name="Plant J.">
        <title>Araport11: a complete reannotation of the Arabidopsis thaliana reference genome.</title>
        <authorList>
            <person name="Cheng C.Y."/>
            <person name="Krishnakumar V."/>
            <person name="Chan A.P."/>
            <person name="Thibaud-Nissen F."/>
            <person name="Schobel S."/>
            <person name="Town C.D."/>
        </authorList>
    </citation>
    <scope>GENOME REANNOTATION</scope>
    <source>
        <strain>cv. Columbia</strain>
    </source>
</reference>
<reference key="3">
    <citation type="submission" date="2006-08" db="EMBL/GenBank/DDBJ databases">
        <title>Arabidopsis ORF clones.</title>
        <authorList>
            <person name="Quinitio C."/>
            <person name="Chen H."/>
            <person name="Kim C.J."/>
            <person name="Shinn P."/>
            <person name="Ecker J.R."/>
        </authorList>
    </citation>
    <scope>NUCLEOTIDE SEQUENCE [LARGE SCALE MRNA]</scope>
    <source>
        <strain>cv. Columbia</strain>
    </source>
</reference>
<reference key="4">
    <citation type="journal article" date="2004" name="Plant Cell">
        <title>Genome-wide analysis of Arabidopsis pentatricopeptide repeat proteins reveals their essential role in organelle biogenesis.</title>
        <authorList>
            <person name="Lurin C."/>
            <person name="Andres C."/>
            <person name="Aubourg S."/>
            <person name="Bellaoui M."/>
            <person name="Bitton F."/>
            <person name="Bruyere C."/>
            <person name="Caboche M."/>
            <person name="Debast C."/>
            <person name="Gualberto J."/>
            <person name="Hoffmann B."/>
            <person name="Lecharny A."/>
            <person name="Le Ret M."/>
            <person name="Martin-Magniette M.-L."/>
            <person name="Mireau H."/>
            <person name="Peeters N."/>
            <person name="Renou J.-P."/>
            <person name="Szurek B."/>
            <person name="Taconnat L."/>
            <person name="Small I."/>
        </authorList>
    </citation>
    <scope>GENE FAMILY</scope>
</reference>
<gene>
    <name type="primary">PCMP-A1</name>
    <name type="ordered locus">At1g31790</name>
    <name type="ORF">F5M6.20</name>
</gene>
<protein>
    <recommendedName>
        <fullName>Pentatricopeptide repeat-containing protein At1g31790</fullName>
    </recommendedName>
</protein>
<organism>
    <name type="scientific">Arabidopsis thaliana</name>
    <name type="common">Mouse-ear cress</name>
    <dbReference type="NCBI Taxonomy" id="3702"/>
    <lineage>
        <taxon>Eukaryota</taxon>
        <taxon>Viridiplantae</taxon>
        <taxon>Streptophyta</taxon>
        <taxon>Embryophyta</taxon>
        <taxon>Tracheophyta</taxon>
        <taxon>Spermatophyta</taxon>
        <taxon>Magnoliopsida</taxon>
        <taxon>eudicotyledons</taxon>
        <taxon>Gunneridae</taxon>
        <taxon>Pentapetalae</taxon>
        <taxon>rosids</taxon>
        <taxon>malvids</taxon>
        <taxon>Brassicales</taxon>
        <taxon>Brassicaceae</taxon>
        <taxon>Camelineae</taxon>
        <taxon>Arabidopsis</taxon>
    </lineage>
</organism>